<evidence type="ECO:0000250" key="1"/>
<evidence type="ECO:0000255" key="2"/>
<evidence type="ECO:0000269" key="3">
    <source>
    </source>
</evidence>
<evidence type="ECO:0000269" key="4">
    <source>
    </source>
</evidence>
<protein>
    <recommendedName>
        <fullName>Wall-associated proteinase</fullName>
        <ecNumber>3.4.21.-</ecNumber>
    </recommendedName>
</protein>
<reference key="1">
    <citation type="journal article" date="2009" name="Genome Res.">
        <title>Comparative genomic analyses of the human fungal pathogens Coccidioides and their relatives.</title>
        <authorList>
            <person name="Sharpton T.J."/>
            <person name="Stajich J.E."/>
            <person name="Rounsley S.D."/>
            <person name="Gardner M.J."/>
            <person name="Wortman J.R."/>
            <person name="Jordar V.S."/>
            <person name="Maiti R."/>
            <person name="Kodira C.D."/>
            <person name="Neafsey D.E."/>
            <person name="Zeng Q."/>
            <person name="Hung C.-Y."/>
            <person name="McMahan C."/>
            <person name="Muszewska A."/>
            <person name="Grynberg M."/>
            <person name="Mandel M.A."/>
            <person name="Kellner E.M."/>
            <person name="Barker B.M."/>
            <person name="Galgiani J.N."/>
            <person name="Orbach M.J."/>
            <person name="Kirkland T.N."/>
            <person name="Cole G.T."/>
            <person name="Henn M.R."/>
            <person name="Birren B.W."/>
            <person name="Taylor J.W."/>
        </authorList>
    </citation>
    <scope>NUCLEOTIDE SEQUENCE [LARGE SCALE GENOMIC DNA]</scope>
    <source>
        <strain>RS</strain>
    </source>
</reference>
<reference key="2">
    <citation type="journal article" date="2010" name="Genome Res.">
        <title>Population genomic sequencing of Coccidioides fungi reveals recent hybridization and transposon control.</title>
        <authorList>
            <person name="Neafsey D.E."/>
            <person name="Barker B.M."/>
            <person name="Sharpton T.J."/>
            <person name="Stajich J.E."/>
            <person name="Park D.J."/>
            <person name="Whiston E."/>
            <person name="Hung C.-Y."/>
            <person name="McMahan C."/>
            <person name="White J."/>
            <person name="Sykes S."/>
            <person name="Heiman D."/>
            <person name="Young S."/>
            <person name="Zeng Q."/>
            <person name="Abouelleil A."/>
            <person name="Aftuck L."/>
            <person name="Bessette D."/>
            <person name="Brown A."/>
            <person name="FitzGerald M."/>
            <person name="Lui A."/>
            <person name="Macdonald J.P."/>
            <person name="Priest M."/>
            <person name="Orbach M.J."/>
            <person name="Galgiani J.N."/>
            <person name="Kirkland T.N."/>
            <person name="Cole G.T."/>
            <person name="Birren B.W."/>
            <person name="Henn M.R."/>
            <person name="Taylor J.W."/>
            <person name="Rounsley S.D."/>
        </authorList>
    </citation>
    <scope>GENOME REANNOTATION</scope>
    <source>
        <strain>RS</strain>
    </source>
</reference>
<reference key="3">
    <citation type="journal article" date="1997" name="Proc. Natl. Acad. Sci. U.S.A.">
        <title>Concordance of gene genealogies reveals reproductive isolation in the pathogenic fungus Coccidioides immitis.</title>
        <authorList>
            <person name="Koufopanou V."/>
            <person name="Burt A."/>
            <person name="Taylor J.W."/>
        </authorList>
    </citation>
    <scope>NUCLEOTIDE SEQUENCE [GENOMIC DNA] OF 85-261</scope>
    <scope>VARIANT GLY-196</scope>
    <source>
        <strain>RMSCC 2267 / CA1</strain>
    </source>
</reference>
<reference key="4">
    <citation type="journal article" date="1998" name="Proc. Natl. Acad. Sci. U.S.A.">
        <authorList>
            <person name="Koufopanou V."/>
            <person name="Burt A."/>
            <person name="Taylor J.W."/>
        </authorList>
    </citation>
    <scope>ERRATUM OF PUBMED:9144263</scope>
</reference>
<reference key="5">
    <citation type="journal article" date="2006" name="Nippon Ishinkin Gakkai Zasshi">
        <title>Reexamination of Coccidioides spp. reserved in the Research Center for Pathogenic Fungi and Microbial Toxicoses, Chiba University, based on a multiple gene analysis.</title>
        <authorList>
            <person name="Sano A."/>
            <person name="Miyaji M."/>
            <person name="Kamei K."/>
            <person name="Mikami Y."/>
            <person name="Nishimura K."/>
        </authorList>
    </citation>
    <scope>NUCLEOTIDE SEQUENCE [GENOMIC DNA] OF 85-261</scope>
    <scope>VARIANT GLY-196</scope>
    <source>
        <strain>IFM 45815</strain>
        <strain>IFM 45816</strain>
        <strain>IFM 46868</strain>
        <strain>IFM 50992</strain>
        <strain>IFM 50995</strain>
    </source>
</reference>
<name>WAPP_COCIM</name>
<organism>
    <name type="scientific">Coccidioides immitis (strain RS)</name>
    <name type="common">Valley fever fungus</name>
    <dbReference type="NCBI Taxonomy" id="246410"/>
    <lineage>
        <taxon>Eukaryota</taxon>
        <taxon>Fungi</taxon>
        <taxon>Dikarya</taxon>
        <taxon>Ascomycota</taxon>
        <taxon>Pezizomycotina</taxon>
        <taxon>Eurotiomycetes</taxon>
        <taxon>Eurotiomycetidae</taxon>
        <taxon>Onygenales</taxon>
        <taxon>Onygenaceae</taxon>
        <taxon>Coccidioides</taxon>
    </lineage>
</organism>
<dbReference type="EC" id="3.4.21.-"/>
<dbReference type="EMBL" id="GG704915">
    <property type="protein sequence ID" value="EAS28100.3"/>
    <property type="molecule type" value="Genomic_DNA"/>
</dbReference>
<dbReference type="EMBL" id="AJ408861">
    <property type="protein sequence ID" value="CAC29127.1"/>
    <property type="molecule type" value="Genomic_DNA"/>
</dbReference>
<dbReference type="EMBL" id="AB232733">
    <property type="protein sequence ID" value="BAE20277.1"/>
    <property type="molecule type" value="Genomic_DNA"/>
</dbReference>
<dbReference type="EMBL" id="AB232734">
    <property type="protein sequence ID" value="BAE20278.1"/>
    <property type="molecule type" value="Genomic_DNA"/>
</dbReference>
<dbReference type="EMBL" id="AB232736">
    <property type="protein sequence ID" value="BAE20280.1"/>
    <property type="molecule type" value="Genomic_DNA"/>
</dbReference>
<dbReference type="EMBL" id="AB232737">
    <property type="protein sequence ID" value="BAE20281.1"/>
    <property type="molecule type" value="Genomic_DNA"/>
</dbReference>
<dbReference type="EMBL" id="AB232740">
    <property type="protein sequence ID" value="BAE20284.1"/>
    <property type="molecule type" value="Genomic_DNA"/>
</dbReference>
<dbReference type="RefSeq" id="XP_001239683.1">
    <property type="nucleotide sequence ID" value="XM_001239682.2"/>
</dbReference>
<dbReference type="SMR" id="Q1DK59"/>
<dbReference type="GeneID" id="4558625"/>
<dbReference type="KEGG" id="cim:CIMG_09304"/>
<dbReference type="VEuPathDB" id="FungiDB:CIMG_09304"/>
<dbReference type="InParanoid" id="Q1DK59"/>
<dbReference type="OMA" id="KKITHFR"/>
<dbReference type="OrthoDB" id="4537659at2759"/>
<dbReference type="Proteomes" id="UP000001261">
    <property type="component" value="Unassembled WGS sequence"/>
</dbReference>
<dbReference type="GO" id="GO:0005576">
    <property type="term" value="C:extracellular region"/>
    <property type="evidence" value="ECO:0007669"/>
    <property type="project" value="UniProtKB-KW"/>
</dbReference>
<dbReference type="GO" id="GO:0016020">
    <property type="term" value="C:membrane"/>
    <property type="evidence" value="ECO:0007669"/>
    <property type="project" value="UniProtKB-SubCell"/>
</dbReference>
<dbReference type="GO" id="GO:0008236">
    <property type="term" value="F:serine-type peptidase activity"/>
    <property type="evidence" value="ECO:0007669"/>
    <property type="project" value="UniProtKB-KW"/>
</dbReference>
<dbReference type="GO" id="GO:0006508">
    <property type="term" value="P:proteolysis"/>
    <property type="evidence" value="ECO:0007669"/>
    <property type="project" value="UniProtKB-KW"/>
</dbReference>
<dbReference type="Gene3D" id="2.120.10.70">
    <property type="entry name" value="Fucose-specific lectin"/>
    <property type="match status" value="1"/>
</dbReference>
<dbReference type="SUPFAM" id="SSF89372">
    <property type="entry name" value="Fucose-specific lectin"/>
    <property type="match status" value="1"/>
</dbReference>
<feature type="signal peptide" evidence="2">
    <location>
        <begin position="1"/>
        <end status="unknown"/>
    </location>
</feature>
<feature type="chain" id="PRO_0000252290" description="Wall-associated proteinase">
    <location>
        <begin status="unknown"/>
        <end position="309"/>
    </location>
</feature>
<feature type="glycosylation site" description="N-linked (GlcNAc...) asparagine" evidence="2">
    <location>
        <position position="190"/>
    </location>
</feature>
<feature type="glycosylation site" description="N-linked (GlcNAc...) asparagine" evidence="2">
    <location>
        <position position="295"/>
    </location>
</feature>
<feature type="sequence variant" description="In strain: IFM 45815, IFM 45816, IFM 46868, IFM 50992, IFM 50995 and RMSCC 2267 / CA1." evidence="3 4">
    <original>A</original>
    <variation>G</variation>
    <location>
        <position position="196"/>
    </location>
</feature>
<proteinExistence type="inferred from homology"/>
<keyword id="KW-0134">Cell wall</keyword>
<keyword id="KW-0325">Glycoprotein</keyword>
<keyword id="KW-0378">Hydrolase</keyword>
<keyword id="KW-0472">Membrane</keyword>
<keyword id="KW-0645">Protease</keyword>
<keyword id="KW-1185">Reference proteome</keyword>
<keyword id="KW-0964">Secreted</keyword>
<keyword id="KW-0720">Serine protease</keyword>
<keyword id="KW-0732">Signal</keyword>
<comment type="function">
    <text evidence="1">May participate in wall plasticization and/or intussusception or in cell wall turnover.</text>
</comment>
<comment type="subcellular location">
    <subcellularLocation>
        <location evidence="1">Secreted</location>
        <location evidence="1">Cell wall</location>
    </subcellularLocation>
    <subcellularLocation>
        <location evidence="1">Membrane</location>
        <topology evidence="1">Peripheral membrane protein</topology>
    </subcellularLocation>
</comment>
<accession>Q1DK59</accession>
<accession>J3K2R7</accession>
<accession>Q9C2W2</accession>
<gene>
    <name type="ORF">CIMG_09304</name>
</gene>
<sequence length="309" mass="34228">MASPVTVLENPIPKSGQHLLFFLTSKQQLALEQRPIESSLGYSAYVDHGVSQGVIVNPSSIAAAMRSSLVTVYGITKPGTDKQYISVISPTYNLIANRQNQPIETTQKALAACSDNDRNNWVYYLNLPQGTPQYAIYELNIQDSSSAPTVYSGPTPSGNSNLAAVYFSPNKDRFIIFSNTDTRHYLYWVNSTLQSANRISGTGSVMSASPLAATTITNVQTRSMTIFLYYMDVNTLLNRIVGKVTDNEIHWYANQVVEGAPPMKVDTLLTGVVVEGKWNCLYYIPDGDTEFRAFNDTIRDSFFDEPREG</sequence>